<sequence>MDTLFRLVSLHHHHHHQHAASPSPPDQPHKSYPSSRGSTSSPSSHHTHNHTYYHHSHSHYNNNSNTNYYYQGGGGGGGGYYYAEEQQPAAYLEECGNGHQFYMDEDFSSSSSSRQFHSGTGAPSSAPVPPPPSATTSSAGGHGLFEAADFSFPQVDISLDFGGSPAVPSSSGAGAGAGAAPSSSGRWAAQLLMECARAVAGRDSQRVQQLMWMLNELASPYGDVDQKLASYFLQGLFARLTTSGPRTLRTLATASDRNASFDSTRRTALKFQELSPWTPFGHVAANGAILESFLEAAAAGAAASSSSSSSSSTPPTRLHILDLSNTFCTQWPTLLEALATRSSDDTPHLSITTVVPTAAPSAAAQRVMREIGQRLEKFARLMGVPFSFRAVHHSGDLADLDLAALDLREGGATAALAVNCVNALRGVARGRDAFVASLRRLEPRVVTVVEEEADLAAPEADASSEADTDAAFVKVFGEGLRFFSAYMDSLEESFPKTSNERLSLERAVGRAIVDLVSCPASQSAERRETAASWARRMRSAGFSPAAFSEDVADDVRSLLRRYKEGWSMRDAGGATDDAAGAAAAGAFLAWKEQPVVWASAWKP</sequence>
<organism>
    <name type="scientific">Oryza sativa subsp. japonica</name>
    <name type="common">Rice</name>
    <dbReference type="NCBI Taxonomy" id="39947"/>
    <lineage>
        <taxon>Eukaryota</taxon>
        <taxon>Viridiplantae</taxon>
        <taxon>Streptophyta</taxon>
        <taxon>Embryophyta</taxon>
        <taxon>Tracheophyta</taxon>
        <taxon>Spermatophyta</taxon>
        <taxon>Magnoliopsida</taxon>
        <taxon>Liliopsida</taxon>
        <taxon>Poales</taxon>
        <taxon>Poaceae</taxon>
        <taxon>BOP clade</taxon>
        <taxon>Oryzoideae</taxon>
        <taxon>Oryzeae</taxon>
        <taxon>Oryzinae</taxon>
        <taxon>Oryza</taxon>
        <taxon>Oryza sativa</taxon>
    </lineage>
</organism>
<feature type="chain" id="PRO_0000329426" description="Protein SHORT-ROOT 2">
    <location>
        <begin position="1"/>
        <end position="603"/>
    </location>
</feature>
<feature type="domain" description="GRAS" evidence="2">
    <location>
        <begin position="179"/>
        <end position="602"/>
    </location>
</feature>
<feature type="region of interest" description="Disordered" evidence="3">
    <location>
        <begin position="11"/>
        <end position="58"/>
    </location>
</feature>
<feature type="region of interest" description="Disordered" evidence="3">
    <location>
        <begin position="106"/>
        <end position="140"/>
    </location>
</feature>
<feature type="region of interest" description="Leucine repeat I (LRI)" evidence="2">
    <location>
        <begin position="186"/>
        <end position="249"/>
    </location>
</feature>
<feature type="region of interest" description="VHIID" evidence="2">
    <location>
        <begin position="268"/>
        <end position="354"/>
    </location>
</feature>
<feature type="region of interest" description="Leucine repeat II (LRII)" evidence="2">
    <location>
        <begin position="370"/>
        <end position="406"/>
    </location>
</feature>
<feature type="region of interest" description="PFYRE" evidence="2">
    <location>
        <begin position="416"/>
        <end position="514"/>
    </location>
</feature>
<feature type="region of interest" description="SAW" evidence="2">
    <location>
        <begin position="517"/>
        <end position="602"/>
    </location>
</feature>
<feature type="short sequence motif" description="VHIID" evidence="2">
    <location>
        <begin position="318"/>
        <end position="322"/>
    </location>
</feature>
<feature type="compositionally biased region" description="Low complexity" evidence="3">
    <location>
        <begin position="31"/>
        <end position="44"/>
    </location>
</feature>
<feature type="compositionally biased region" description="Basic residues" evidence="3">
    <location>
        <begin position="45"/>
        <end position="58"/>
    </location>
</feature>
<feature type="compositionally biased region" description="Low complexity" evidence="3">
    <location>
        <begin position="108"/>
        <end position="125"/>
    </location>
</feature>
<proteinExistence type="evidence at protein level"/>
<keyword id="KW-0217">Developmental protein</keyword>
<keyword id="KW-0539">Nucleus</keyword>
<keyword id="KW-1185">Reference proteome</keyword>
<keyword id="KW-0804">Transcription</keyword>
<keyword id="KW-0805">Transcription regulation</keyword>
<gene>
    <name type="primary">SHR2</name>
    <name type="ordered locus">Os03g0433200</name>
    <name type="ordered locus">LOC_Os03g31880</name>
    <name type="ORF">OsJ_010915</name>
    <name type="ORF">OSJNBb0031F05.14</name>
</gene>
<comment type="function">
    <text evidence="1">Putative transcription factor involved in asymmetric cell division.</text>
</comment>
<comment type="subunit">
    <text>Does not interact with SCR1.</text>
</comment>
<comment type="subcellular location">
    <subcellularLocation>
        <location evidence="1">Nucleus</location>
    </subcellularLocation>
</comment>
<comment type="similarity">
    <text evidence="4">Belongs to the GRAS family.</text>
</comment>
<name>SHR2_ORYSJ</name>
<dbReference type="EMBL" id="AC133861">
    <property type="protein sequence ID" value="AAS07303.1"/>
    <property type="molecule type" value="Genomic_DNA"/>
</dbReference>
<dbReference type="EMBL" id="DP000009">
    <property type="protein sequence ID" value="ABF96780.1"/>
    <property type="molecule type" value="Genomic_DNA"/>
</dbReference>
<dbReference type="EMBL" id="AP008209">
    <property type="protein sequence ID" value="BAH92215.1"/>
    <property type="molecule type" value="Genomic_DNA"/>
</dbReference>
<dbReference type="EMBL" id="AP014959">
    <property type="protein sequence ID" value="BAS84831.1"/>
    <property type="molecule type" value="Genomic_DNA"/>
</dbReference>
<dbReference type="EMBL" id="CM000140">
    <property type="status" value="NOT_ANNOTATED_CDS"/>
    <property type="molecule type" value="Genomic_DNA"/>
</dbReference>
<dbReference type="RefSeq" id="XP_015629293.1">
    <property type="nucleotide sequence ID" value="XM_015773807.1"/>
</dbReference>
<dbReference type="SMR" id="Q75I13"/>
<dbReference type="BioGRID" id="1214754">
    <property type="interactions" value="3"/>
</dbReference>
<dbReference type="FunCoup" id="Q75I13">
    <property type="interactions" value="816"/>
</dbReference>
<dbReference type="STRING" id="39947.Q75I13"/>
<dbReference type="PaxDb" id="39947-Q75I13"/>
<dbReference type="EnsemblPlants" id="Os03t0433200-01">
    <property type="protein sequence ID" value="Os03t0433200-01"/>
    <property type="gene ID" value="Os03g0433200"/>
</dbReference>
<dbReference type="Gramene" id="Os03t0433200-01">
    <property type="protein sequence ID" value="Os03t0433200-01"/>
    <property type="gene ID" value="Os03g0433200"/>
</dbReference>
<dbReference type="KEGG" id="dosa:Os03g0433200"/>
<dbReference type="eggNOG" id="ENOG502QQN4">
    <property type="taxonomic scope" value="Eukaryota"/>
</dbReference>
<dbReference type="HOGENOM" id="CLU_011924_5_1_1"/>
<dbReference type="InParanoid" id="Q75I13"/>
<dbReference type="OMA" id="IFLAWKD"/>
<dbReference type="OrthoDB" id="1913536at2759"/>
<dbReference type="Proteomes" id="UP000000763">
    <property type="component" value="Chromosome 3"/>
</dbReference>
<dbReference type="Proteomes" id="UP000007752">
    <property type="component" value="Chromosome 3"/>
</dbReference>
<dbReference type="Proteomes" id="UP000059680">
    <property type="component" value="Chromosome 3"/>
</dbReference>
<dbReference type="GO" id="GO:0005634">
    <property type="term" value="C:nucleus"/>
    <property type="evidence" value="ECO:0000318"/>
    <property type="project" value="GO_Central"/>
</dbReference>
<dbReference type="GO" id="GO:0003700">
    <property type="term" value="F:DNA-binding transcription factor activity"/>
    <property type="evidence" value="ECO:0000318"/>
    <property type="project" value="GO_Central"/>
</dbReference>
<dbReference type="GO" id="GO:0043565">
    <property type="term" value="F:sequence-specific DNA binding"/>
    <property type="evidence" value="ECO:0000318"/>
    <property type="project" value="GO_Central"/>
</dbReference>
<dbReference type="GO" id="GO:0008356">
    <property type="term" value="P:asymmetric cell division"/>
    <property type="evidence" value="ECO:0000318"/>
    <property type="project" value="GO_Central"/>
</dbReference>
<dbReference type="GO" id="GO:0048366">
    <property type="term" value="P:leaf development"/>
    <property type="evidence" value="ECO:0000318"/>
    <property type="project" value="GO_Central"/>
</dbReference>
<dbReference type="GO" id="GO:0045930">
    <property type="term" value="P:negative regulation of mitotic cell cycle"/>
    <property type="evidence" value="ECO:0000318"/>
    <property type="project" value="GO_Central"/>
</dbReference>
<dbReference type="GO" id="GO:0009956">
    <property type="term" value="P:radial pattern formation"/>
    <property type="evidence" value="ECO:0000318"/>
    <property type="project" value="GO_Central"/>
</dbReference>
<dbReference type="GO" id="GO:0006355">
    <property type="term" value="P:regulation of DNA-templated transcription"/>
    <property type="evidence" value="ECO:0000318"/>
    <property type="project" value="GO_Central"/>
</dbReference>
<dbReference type="InterPro" id="IPR005202">
    <property type="entry name" value="TF_GRAS"/>
</dbReference>
<dbReference type="PANTHER" id="PTHR31636">
    <property type="entry name" value="OSJNBA0084A10.13 PROTEIN-RELATED"/>
    <property type="match status" value="1"/>
</dbReference>
<dbReference type="Pfam" id="PF03514">
    <property type="entry name" value="GRAS"/>
    <property type="match status" value="1"/>
</dbReference>
<dbReference type="PROSITE" id="PS50985">
    <property type="entry name" value="GRAS"/>
    <property type="match status" value="1"/>
</dbReference>
<reference key="1">
    <citation type="journal article" date="2005" name="Genome Res.">
        <title>Sequence, annotation, and analysis of synteny between rice chromosome 3 and diverged grass species.</title>
        <authorList>
            <consortium name="The rice chromosome 3 sequencing consortium"/>
            <person name="Buell C.R."/>
            <person name="Yuan Q."/>
            <person name="Ouyang S."/>
            <person name="Liu J."/>
            <person name="Zhu W."/>
            <person name="Wang A."/>
            <person name="Maiti R."/>
            <person name="Haas B."/>
            <person name="Wortman J."/>
            <person name="Pertea M."/>
            <person name="Jones K.M."/>
            <person name="Kim M."/>
            <person name="Overton L."/>
            <person name="Tsitrin T."/>
            <person name="Fadrosh D."/>
            <person name="Bera J."/>
            <person name="Weaver B."/>
            <person name="Jin S."/>
            <person name="Johri S."/>
            <person name="Reardon M."/>
            <person name="Webb K."/>
            <person name="Hill J."/>
            <person name="Moffat K."/>
            <person name="Tallon L."/>
            <person name="Van Aken S."/>
            <person name="Lewis M."/>
            <person name="Utterback T."/>
            <person name="Feldblyum T."/>
            <person name="Zismann V."/>
            <person name="Iobst S."/>
            <person name="Hsiao J."/>
            <person name="de Vazeille A.R."/>
            <person name="Salzberg S.L."/>
            <person name="White O."/>
            <person name="Fraser C.M."/>
            <person name="Yu Y."/>
            <person name="Kim H."/>
            <person name="Rambo T."/>
            <person name="Currie J."/>
            <person name="Collura K."/>
            <person name="Kernodle-Thompson S."/>
            <person name="Wei F."/>
            <person name="Kudrna K."/>
            <person name="Ammiraju J.S.S."/>
            <person name="Luo M."/>
            <person name="Goicoechea J.L."/>
            <person name="Wing R.A."/>
            <person name="Henry D."/>
            <person name="Oates R."/>
            <person name="Palmer M."/>
            <person name="Pries G."/>
            <person name="Saski C."/>
            <person name="Simmons J."/>
            <person name="Soderlund C."/>
            <person name="Nelson W."/>
            <person name="de la Bastide M."/>
            <person name="Spiegel L."/>
            <person name="Nascimento L."/>
            <person name="Huang E."/>
            <person name="Preston R."/>
            <person name="Zutavern T."/>
            <person name="Palmer L."/>
            <person name="O'Shaughnessy A."/>
            <person name="Dike S."/>
            <person name="McCombie W.R."/>
            <person name="Minx P."/>
            <person name="Cordum H."/>
            <person name="Wilson R."/>
            <person name="Jin W."/>
            <person name="Lee H.R."/>
            <person name="Jiang J."/>
            <person name="Jackson S."/>
        </authorList>
    </citation>
    <scope>NUCLEOTIDE SEQUENCE [LARGE SCALE GENOMIC DNA]</scope>
    <source>
        <strain>cv. Nipponbare</strain>
    </source>
</reference>
<reference key="2">
    <citation type="journal article" date="2005" name="Nature">
        <title>The map-based sequence of the rice genome.</title>
        <authorList>
            <consortium name="International rice genome sequencing project (IRGSP)"/>
        </authorList>
    </citation>
    <scope>NUCLEOTIDE SEQUENCE [LARGE SCALE GENOMIC DNA]</scope>
    <source>
        <strain>cv. Nipponbare</strain>
    </source>
</reference>
<reference key="3">
    <citation type="journal article" date="2008" name="Nucleic Acids Res.">
        <title>The rice annotation project database (RAP-DB): 2008 update.</title>
        <authorList>
            <consortium name="The rice annotation project (RAP)"/>
        </authorList>
    </citation>
    <scope>GENOME REANNOTATION</scope>
    <source>
        <strain>cv. Nipponbare</strain>
    </source>
</reference>
<reference key="4">
    <citation type="journal article" date="2013" name="Rice">
        <title>Improvement of the Oryza sativa Nipponbare reference genome using next generation sequence and optical map data.</title>
        <authorList>
            <person name="Kawahara Y."/>
            <person name="de la Bastide M."/>
            <person name="Hamilton J.P."/>
            <person name="Kanamori H."/>
            <person name="McCombie W.R."/>
            <person name="Ouyang S."/>
            <person name="Schwartz D.C."/>
            <person name="Tanaka T."/>
            <person name="Wu J."/>
            <person name="Zhou S."/>
            <person name="Childs K.L."/>
            <person name="Davidson R.M."/>
            <person name="Lin H."/>
            <person name="Quesada-Ocampo L."/>
            <person name="Vaillancourt B."/>
            <person name="Sakai H."/>
            <person name="Lee S.S."/>
            <person name="Kim J."/>
            <person name="Numa H."/>
            <person name="Itoh T."/>
            <person name="Buell C.R."/>
            <person name="Matsumoto T."/>
        </authorList>
    </citation>
    <scope>GENOME REANNOTATION</scope>
    <source>
        <strain>cv. Nipponbare</strain>
    </source>
</reference>
<reference key="5">
    <citation type="journal article" date="2005" name="PLoS Biol.">
        <title>The genomes of Oryza sativa: a history of duplications.</title>
        <authorList>
            <person name="Yu J."/>
            <person name="Wang J."/>
            <person name="Lin W."/>
            <person name="Li S."/>
            <person name="Li H."/>
            <person name="Zhou J."/>
            <person name="Ni P."/>
            <person name="Dong W."/>
            <person name="Hu S."/>
            <person name="Zeng C."/>
            <person name="Zhang J."/>
            <person name="Zhang Y."/>
            <person name="Li R."/>
            <person name="Xu Z."/>
            <person name="Li S."/>
            <person name="Li X."/>
            <person name="Zheng H."/>
            <person name="Cong L."/>
            <person name="Lin L."/>
            <person name="Yin J."/>
            <person name="Geng J."/>
            <person name="Li G."/>
            <person name="Shi J."/>
            <person name="Liu J."/>
            <person name="Lv H."/>
            <person name="Li J."/>
            <person name="Wang J."/>
            <person name="Deng Y."/>
            <person name="Ran L."/>
            <person name="Shi X."/>
            <person name="Wang X."/>
            <person name="Wu Q."/>
            <person name="Li C."/>
            <person name="Ren X."/>
            <person name="Wang J."/>
            <person name="Wang X."/>
            <person name="Li D."/>
            <person name="Liu D."/>
            <person name="Zhang X."/>
            <person name="Ji Z."/>
            <person name="Zhao W."/>
            <person name="Sun Y."/>
            <person name="Zhang Z."/>
            <person name="Bao J."/>
            <person name="Han Y."/>
            <person name="Dong L."/>
            <person name="Ji J."/>
            <person name="Chen P."/>
            <person name="Wu S."/>
            <person name="Liu J."/>
            <person name="Xiao Y."/>
            <person name="Bu D."/>
            <person name="Tan J."/>
            <person name="Yang L."/>
            <person name="Ye C."/>
            <person name="Zhang J."/>
            <person name="Xu J."/>
            <person name="Zhou Y."/>
            <person name="Yu Y."/>
            <person name="Zhang B."/>
            <person name="Zhuang S."/>
            <person name="Wei H."/>
            <person name="Liu B."/>
            <person name="Lei M."/>
            <person name="Yu H."/>
            <person name="Li Y."/>
            <person name="Xu H."/>
            <person name="Wei S."/>
            <person name="He X."/>
            <person name="Fang L."/>
            <person name="Zhang Z."/>
            <person name="Zhang Y."/>
            <person name="Huang X."/>
            <person name="Su Z."/>
            <person name="Tong W."/>
            <person name="Li J."/>
            <person name="Tong Z."/>
            <person name="Li S."/>
            <person name="Ye J."/>
            <person name="Wang L."/>
            <person name="Fang L."/>
            <person name="Lei T."/>
            <person name="Chen C.-S."/>
            <person name="Chen H.-C."/>
            <person name="Xu Z."/>
            <person name="Li H."/>
            <person name="Huang H."/>
            <person name="Zhang F."/>
            <person name="Xu H."/>
            <person name="Li N."/>
            <person name="Zhao C."/>
            <person name="Li S."/>
            <person name="Dong L."/>
            <person name="Huang Y."/>
            <person name="Li L."/>
            <person name="Xi Y."/>
            <person name="Qi Q."/>
            <person name="Li W."/>
            <person name="Zhang B."/>
            <person name="Hu W."/>
            <person name="Zhang Y."/>
            <person name="Tian X."/>
            <person name="Jiao Y."/>
            <person name="Liang X."/>
            <person name="Jin J."/>
            <person name="Gao L."/>
            <person name="Zheng W."/>
            <person name="Hao B."/>
            <person name="Liu S.-M."/>
            <person name="Wang W."/>
            <person name="Yuan L."/>
            <person name="Cao M."/>
            <person name="McDermott J."/>
            <person name="Samudrala R."/>
            <person name="Wang J."/>
            <person name="Wong G.K.-S."/>
            <person name="Yang H."/>
        </authorList>
    </citation>
    <scope>NUCLEOTIDE SEQUENCE [LARGE SCALE GENOMIC DNA]</scope>
    <source>
        <strain>cv. Nipponbare</strain>
    </source>
</reference>
<reference key="6">
    <citation type="journal article" date="2007" name="Science">
        <title>An evolutionarily conserved mechanism delimiting SHR movement defines a single layer of endodermis in plants.</title>
        <authorList>
            <person name="Cui H."/>
            <person name="Levesque M.P."/>
            <person name="Vernoux T."/>
            <person name="Jung J.W."/>
            <person name="Paquette A.J."/>
            <person name="Gallagher K.L."/>
            <person name="Wang J.Y."/>
            <person name="Blilou I."/>
            <person name="Scheres B."/>
            <person name="Benfey P.N."/>
        </authorList>
    </citation>
    <scope>LACK OF INTERACTION WITH SCR1</scope>
    <source>
        <strain>cv. Nipponbare</strain>
    </source>
</reference>
<protein>
    <recommendedName>
        <fullName>Protein SHORT-ROOT 2</fullName>
    </recommendedName>
    <alternativeName>
        <fullName>OsSHR2</fullName>
    </alternativeName>
</protein>
<evidence type="ECO:0000250" key="1"/>
<evidence type="ECO:0000255" key="2">
    <source>
        <dbReference type="PROSITE-ProRule" id="PRU01191"/>
    </source>
</evidence>
<evidence type="ECO:0000256" key="3">
    <source>
        <dbReference type="SAM" id="MobiDB-lite"/>
    </source>
</evidence>
<evidence type="ECO:0000305" key="4"/>
<accession>Q75I13</accession>
<accession>A3AJE3</accession>
<accession>C7J0D7</accession>